<evidence type="ECO:0000250" key="1">
    <source>
        <dbReference type="UniProtKB" id="Q9Y4X5"/>
    </source>
</evidence>
<evidence type="ECO:0000255" key="2">
    <source>
        <dbReference type="PROSITE-ProRule" id="PRU01221"/>
    </source>
</evidence>
<evidence type="ECO:0000256" key="3">
    <source>
        <dbReference type="SAM" id="MobiDB-lite"/>
    </source>
</evidence>
<evidence type="ECO:0000305" key="4"/>
<feature type="chain" id="PRO_0000410897" description="E3 ubiquitin-protein ligase arih1">
    <location>
        <begin position="1"/>
        <end position="529"/>
    </location>
</feature>
<feature type="zinc finger region" description="RING-type 1" evidence="2">
    <location>
        <begin position="158"/>
        <end position="208"/>
    </location>
</feature>
<feature type="zinc finger region" description="IBR-type" evidence="2">
    <location>
        <begin position="228"/>
        <end position="289"/>
    </location>
</feature>
<feature type="zinc finger region" description="RING-type 2; atypical" evidence="2">
    <location>
        <begin position="316"/>
        <end position="347"/>
    </location>
</feature>
<feature type="region of interest" description="Disordered" evidence="3">
    <location>
        <begin position="1"/>
        <end position="29"/>
    </location>
</feature>
<feature type="region of interest" description="Disordered" evidence="3">
    <location>
        <begin position="46"/>
        <end position="69"/>
    </location>
</feature>
<feature type="region of interest" description="UBA-like" evidence="1">
    <location>
        <begin position="77"/>
        <end position="125"/>
    </location>
</feature>
<feature type="region of interest" description="TRIAD supradomain" evidence="2">
    <location>
        <begin position="154"/>
        <end position="365"/>
    </location>
</feature>
<feature type="region of interest" description="Ariadne domain" evidence="1">
    <location>
        <begin position="380"/>
        <end position="529"/>
    </location>
</feature>
<feature type="compositionally biased region" description="Gly residues" evidence="3">
    <location>
        <begin position="51"/>
        <end position="64"/>
    </location>
</feature>
<feature type="active site" evidence="2">
    <location>
        <position position="329"/>
    </location>
</feature>
<feature type="binding site" evidence="2">
    <location>
        <position position="158"/>
    </location>
    <ligand>
        <name>Zn(2+)</name>
        <dbReference type="ChEBI" id="CHEBI:29105"/>
        <label>1</label>
    </ligand>
</feature>
<feature type="binding site" evidence="2">
    <location>
        <position position="161"/>
    </location>
    <ligand>
        <name>Zn(2+)</name>
        <dbReference type="ChEBI" id="CHEBI:29105"/>
        <label>1</label>
    </ligand>
</feature>
<feature type="binding site" evidence="2">
    <location>
        <position position="175"/>
    </location>
    <ligand>
        <name>Zn(2+)</name>
        <dbReference type="ChEBI" id="CHEBI:29105"/>
        <label>2</label>
    </ligand>
</feature>
<feature type="binding site" evidence="2">
    <location>
        <position position="177"/>
    </location>
    <ligand>
        <name>Zn(2+)</name>
        <dbReference type="ChEBI" id="CHEBI:29105"/>
        <label>2</label>
    </ligand>
</feature>
<feature type="binding site" evidence="2">
    <location>
        <position position="180"/>
    </location>
    <ligand>
        <name>Zn(2+)</name>
        <dbReference type="ChEBI" id="CHEBI:29105"/>
        <label>1</label>
    </ligand>
</feature>
<feature type="binding site" evidence="2">
    <location>
        <position position="183"/>
    </location>
    <ligand>
        <name>Zn(2+)</name>
        <dbReference type="ChEBI" id="CHEBI:29105"/>
        <label>1</label>
    </ligand>
</feature>
<feature type="binding site" evidence="2">
    <location>
        <position position="203"/>
    </location>
    <ligand>
        <name>Zn(2+)</name>
        <dbReference type="ChEBI" id="CHEBI:29105"/>
        <label>2</label>
    </ligand>
</feature>
<feature type="binding site" evidence="2">
    <location>
        <position position="208"/>
    </location>
    <ligand>
        <name>Zn(2+)</name>
        <dbReference type="ChEBI" id="CHEBI:29105"/>
        <label>2</label>
    </ligand>
</feature>
<feature type="binding site" evidence="2">
    <location>
        <position position="248"/>
    </location>
    <ligand>
        <name>Zn(2+)</name>
        <dbReference type="ChEBI" id="CHEBI:29105"/>
        <label>3</label>
    </ligand>
</feature>
<feature type="binding site" evidence="2">
    <location>
        <position position="253"/>
    </location>
    <ligand>
        <name>Zn(2+)</name>
        <dbReference type="ChEBI" id="CHEBI:29105"/>
        <label>3</label>
    </ligand>
</feature>
<feature type="binding site" evidence="2">
    <location>
        <position position="269"/>
    </location>
    <ligand>
        <name>Zn(2+)</name>
        <dbReference type="ChEBI" id="CHEBI:29105"/>
        <label>3</label>
    </ligand>
</feature>
<feature type="binding site" evidence="2">
    <location>
        <position position="271"/>
    </location>
    <ligand>
        <name>Zn(2+)</name>
        <dbReference type="ChEBI" id="CHEBI:29105"/>
        <label>3</label>
    </ligand>
</feature>
<feature type="binding site" evidence="2">
    <location>
        <position position="276"/>
    </location>
    <ligand>
        <name>Zn(2+)</name>
        <dbReference type="ChEBI" id="CHEBI:29105"/>
        <label>4</label>
    </ligand>
</feature>
<feature type="binding site" evidence="2">
    <location>
        <position position="279"/>
    </location>
    <ligand>
        <name>Zn(2+)</name>
        <dbReference type="ChEBI" id="CHEBI:29105"/>
        <label>4</label>
    </ligand>
</feature>
<feature type="binding site" evidence="2">
    <location>
        <position position="284"/>
    </location>
    <ligand>
        <name>Zn(2+)</name>
        <dbReference type="ChEBI" id="CHEBI:29105"/>
        <label>4</label>
    </ligand>
</feature>
<feature type="binding site" evidence="2">
    <location>
        <position position="289"/>
    </location>
    <ligand>
        <name>Zn(2+)</name>
        <dbReference type="ChEBI" id="CHEBI:29105"/>
        <label>4</label>
    </ligand>
</feature>
<feature type="binding site" evidence="2">
    <location>
        <position position="316"/>
    </location>
    <ligand>
        <name>Zn(2+)</name>
        <dbReference type="ChEBI" id="CHEBI:29105"/>
        <label>5</label>
    </ligand>
</feature>
<feature type="binding site" evidence="2">
    <location>
        <position position="319"/>
    </location>
    <ligand>
        <name>Zn(2+)</name>
        <dbReference type="ChEBI" id="CHEBI:29105"/>
        <label>5</label>
    </ligand>
</feature>
<feature type="binding site" evidence="2">
    <location>
        <position position="334"/>
    </location>
    <ligand>
        <name>Zn(2+)</name>
        <dbReference type="ChEBI" id="CHEBI:29105"/>
        <label>5</label>
    </ligand>
</feature>
<feature type="binding site" evidence="2">
    <location>
        <position position="339"/>
    </location>
    <ligand>
        <name>Zn(2+)</name>
        <dbReference type="ChEBI" id="CHEBI:29105"/>
        <label>5</label>
    </ligand>
</feature>
<feature type="binding site" evidence="2">
    <location>
        <position position="344"/>
    </location>
    <ligand>
        <name>Zn(2+)</name>
        <dbReference type="ChEBI" id="CHEBI:29105"/>
        <label>6</label>
    </ligand>
</feature>
<feature type="binding site" evidence="2">
    <location>
        <position position="347"/>
    </location>
    <ligand>
        <name>Zn(2+)</name>
        <dbReference type="ChEBI" id="CHEBI:29105"/>
        <label>6</label>
    </ligand>
</feature>
<feature type="binding site" evidence="2">
    <location>
        <position position="354"/>
    </location>
    <ligand>
        <name>Zn(2+)</name>
        <dbReference type="ChEBI" id="CHEBI:29105"/>
        <label>6</label>
    </ligand>
</feature>
<feature type="binding site" evidence="2">
    <location>
        <position position="361"/>
    </location>
    <ligand>
        <name>Zn(2+)</name>
        <dbReference type="ChEBI" id="CHEBI:29105"/>
        <label>6</label>
    </ligand>
</feature>
<proteinExistence type="evidence at transcript level"/>
<gene>
    <name type="primary">arih1</name>
</gene>
<protein>
    <recommendedName>
        <fullName>E3 ubiquitin-protein ligase arih1</fullName>
        <ecNumber evidence="1">2.3.2.31</ecNumber>
    </recommendedName>
    <alternativeName>
        <fullName>Protein ariadne-1 homolog</fullName>
        <shortName>ARI-1</shortName>
    </alternativeName>
</protein>
<organism>
    <name type="scientific">Xenopus laevis</name>
    <name type="common">African clawed frog</name>
    <dbReference type="NCBI Taxonomy" id="8355"/>
    <lineage>
        <taxon>Eukaryota</taxon>
        <taxon>Metazoa</taxon>
        <taxon>Chordata</taxon>
        <taxon>Craniata</taxon>
        <taxon>Vertebrata</taxon>
        <taxon>Euteleostomi</taxon>
        <taxon>Amphibia</taxon>
        <taxon>Batrachia</taxon>
        <taxon>Anura</taxon>
        <taxon>Pipoidea</taxon>
        <taxon>Pipidae</taxon>
        <taxon>Xenopodinae</taxon>
        <taxon>Xenopus</taxon>
        <taxon>Xenopus</taxon>
    </lineage>
</organism>
<name>ARI1_XENLA</name>
<dbReference type="EC" id="2.3.2.31" evidence="1"/>
<dbReference type="EMBL" id="BC108502">
    <property type="protein sequence ID" value="AAI08503.1"/>
    <property type="molecule type" value="mRNA"/>
</dbReference>
<dbReference type="RefSeq" id="NP_001089823.1">
    <property type="nucleotide sequence ID" value="NM_001096354.1"/>
</dbReference>
<dbReference type="RefSeq" id="XP_018106743.1">
    <property type="nucleotide sequence ID" value="XM_018251254.1"/>
</dbReference>
<dbReference type="RefSeq" id="XP_018106744.1">
    <property type="nucleotide sequence ID" value="XM_018251255.1"/>
</dbReference>
<dbReference type="RefSeq" id="XP_018106745.1">
    <property type="nucleotide sequence ID" value="XM_018251256.1"/>
</dbReference>
<dbReference type="RefSeq" id="XP_018106746.1">
    <property type="nucleotide sequence ID" value="XM_018251257.1"/>
</dbReference>
<dbReference type="RefSeq" id="XP_018106747.1">
    <property type="nucleotide sequence ID" value="XM_018251258.1"/>
</dbReference>
<dbReference type="BMRB" id="Q32NS4"/>
<dbReference type="SMR" id="Q32NS4"/>
<dbReference type="DNASU" id="734889"/>
<dbReference type="GeneID" id="734889"/>
<dbReference type="KEGG" id="xla:734889"/>
<dbReference type="AGR" id="Xenbase:XB-GENE-972163"/>
<dbReference type="CTD" id="734889"/>
<dbReference type="Xenbase" id="XB-GENE-972163">
    <property type="gene designation" value="arih1.L"/>
</dbReference>
<dbReference type="OMA" id="FEHACES"/>
<dbReference type="OrthoDB" id="10009520at2759"/>
<dbReference type="UniPathway" id="UPA00143"/>
<dbReference type="Proteomes" id="UP000186698">
    <property type="component" value="Chromosome 3L"/>
</dbReference>
<dbReference type="Bgee" id="734889">
    <property type="expression patterns" value="Expressed in testis and 19 other cell types or tissues"/>
</dbReference>
<dbReference type="GO" id="GO:0005737">
    <property type="term" value="C:cytoplasm"/>
    <property type="evidence" value="ECO:0000250"/>
    <property type="project" value="UniProtKB"/>
</dbReference>
<dbReference type="GO" id="GO:0097413">
    <property type="term" value="C:Lewy body"/>
    <property type="evidence" value="ECO:0000250"/>
    <property type="project" value="UniProtKB"/>
</dbReference>
<dbReference type="GO" id="GO:0016604">
    <property type="term" value="C:nuclear body"/>
    <property type="evidence" value="ECO:0000250"/>
    <property type="project" value="UniProtKB"/>
</dbReference>
<dbReference type="GO" id="GO:0005634">
    <property type="term" value="C:nucleus"/>
    <property type="evidence" value="ECO:0000318"/>
    <property type="project" value="GO_Central"/>
</dbReference>
<dbReference type="GO" id="GO:0000151">
    <property type="term" value="C:ubiquitin ligase complex"/>
    <property type="evidence" value="ECO:0000318"/>
    <property type="project" value="GO_Central"/>
</dbReference>
<dbReference type="GO" id="GO:0031624">
    <property type="term" value="F:ubiquitin conjugating enzyme binding"/>
    <property type="evidence" value="ECO:0000318"/>
    <property type="project" value="GO_Central"/>
</dbReference>
<dbReference type="GO" id="GO:0061630">
    <property type="term" value="F:ubiquitin protein ligase activity"/>
    <property type="evidence" value="ECO:0000318"/>
    <property type="project" value="GO_Central"/>
</dbReference>
<dbReference type="GO" id="GO:0004842">
    <property type="term" value="F:ubiquitin-protein transferase activity"/>
    <property type="evidence" value="ECO:0000250"/>
    <property type="project" value="UniProtKB"/>
</dbReference>
<dbReference type="GO" id="GO:0008270">
    <property type="term" value="F:zinc ion binding"/>
    <property type="evidence" value="ECO:0000250"/>
    <property type="project" value="UniProtKB"/>
</dbReference>
<dbReference type="GO" id="GO:0016567">
    <property type="term" value="P:protein ubiquitination"/>
    <property type="evidence" value="ECO:0000250"/>
    <property type="project" value="UniProtKB"/>
</dbReference>
<dbReference type="GO" id="GO:0006511">
    <property type="term" value="P:ubiquitin-dependent protein catabolic process"/>
    <property type="evidence" value="ECO:0000318"/>
    <property type="project" value="GO_Central"/>
</dbReference>
<dbReference type="CDD" id="cd20343">
    <property type="entry name" value="BRcat_RBR_HHARI-like"/>
    <property type="match status" value="1"/>
</dbReference>
<dbReference type="CDD" id="cd20356">
    <property type="entry name" value="Rcat_RBR_HHARI-like"/>
    <property type="match status" value="1"/>
</dbReference>
<dbReference type="CDD" id="cd16626">
    <property type="entry name" value="RING-HC_RBR_HHARI"/>
    <property type="match status" value="1"/>
</dbReference>
<dbReference type="FunFam" id="1.20.120.1750:FF:000002">
    <property type="entry name" value="RBR-type E3 ubiquitin transferase"/>
    <property type="match status" value="1"/>
</dbReference>
<dbReference type="FunFam" id="3.30.40.10:FF:000019">
    <property type="entry name" value="RBR-type E3 ubiquitin transferase"/>
    <property type="match status" value="1"/>
</dbReference>
<dbReference type="Gene3D" id="1.20.120.1750">
    <property type="match status" value="1"/>
</dbReference>
<dbReference type="Gene3D" id="3.30.40.10">
    <property type="entry name" value="Zinc/RING finger domain, C3HC4 (zinc finger)"/>
    <property type="match status" value="1"/>
</dbReference>
<dbReference type="InterPro" id="IPR045840">
    <property type="entry name" value="Ariadne"/>
</dbReference>
<dbReference type="InterPro" id="IPR048962">
    <property type="entry name" value="ARIH1-like_UBL"/>
</dbReference>
<dbReference type="InterPro" id="IPR031127">
    <property type="entry name" value="E3_UB_ligase_RBR"/>
</dbReference>
<dbReference type="InterPro" id="IPR002867">
    <property type="entry name" value="IBR_dom"/>
</dbReference>
<dbReference type="InterPro" id="IPR044066">
    <property type="entry name" value="TRIAD_supradom"/>
</dbReference>
<dbReference type="InterPro" id="IPR001841">
    <property type="entry name" value="Znf_RING"/>
</dbReference>
<dbReference type="InterPro" id="IPR013083">
    <property type="entry name" value="Znf_RING/FYVE/PHD"/>
</dbReference>
<dbReference type="PANTHER" id="PTHR11685">
    <property type="entry name" value="RBR FAMILY RING FINGER AND IBR DOMAIN-CONTAINING"/>
    <property type="match status" value="1"/>
</dbReference>
<dbReference type="Pfam" id="PF19422">
    <property type="entry name" value="Ariadne"/>
    <property type="match status" value="1"/>
</dbReference>
<dbReference type="Pfam" id="PF01485">
    <property type="entry name" value="IBR"/>
    <property type="match status" value="1"/>
</dbReference>
<dbReference type="Pfam" id="PF22191">
    <property type="entry name" value="IBR_1"/>
    <property type="match status" value="1"/>
</dbReference>
<dbReference type="Pfam" id="PF21235">
    <property type="entry name" value="UBA_ARI1"/>
    <property type="match status" value="1"/>
</dbReference>
<dbReference type="SMART" id="SM00647">
    <property type="entry name" value="IBR"/>
    <property type="match status" value="2"/>
</dbReference>
<dbReference type="SUPFAM" id="SSF57850">
    <property type="entry name" value="RING/U-box"/>
    <property type="match status" value="3"/>
</dbReference>
<dbReference type="PROSITE" id="PS51873">
    <property type="entry name" value="TRIAD"/>
    <property type="match status" value="1"/>
</dbReference>
<dbReference type="PROSITE" id="PS50089">
    <property type="entry name" value="ZF_RING_2"/>
    <property type="match status" value="1"/>
</dbReference>
<sequence length="529" mass="61684">MDSDEGYNYEFDDEEECSEESGADEHEDELELGEVELVEAGLSGSERAGLCGEGGGSALGPGPGGEEDEDYRYEVLTAEQILQHMVECIREVNEVIQNPATITRILLSHFNWDKEKLMERYFDGNLEKLFSECHVINPSKKSRTRQMNTRSSALDMPCQICYLNYPNSYFTGLECGHKFCMQCWGEYLTTKIIEEGMGQTISCPAHGCDILVDDNTVMRLITDSKVKLKYQHLITNSFVECNRLLKWCPAPDCHHVVKVQYPDAKPVHCKCGRQFCFNCGENWHDPVKCKWLRKWIKKCDDDSETSNWIAANTKECPKCHVTIEKDGGCNHMVCRNQNCKAEFCWVCLGPWEPHGSAWYNCNRYNEDDAKAARDAQERSRAALQRYLFYCNRYMNHMQSLRFEHKLYAQVKQKMEEMQQHNMSWIEVQFLKKAVDVLCQCRSTLMYTYVFAFYLKKNNQSIIFENNQADLENATEVLSGYLERDISQDSLQDIKQKVQDKYRYCESRRRVLLLHVHEGYEKDLWEYIED</sequence>
<keyword id="KW-0963">Cytoplasm</keyword>
<keyword id="KW-0479">Metal-binding</keyword>
<keyword id="KW-0539">Nucleus</keyword>
<keyword id="KW-1185">Reference proteome</keyword>
<keyword id="KW-0677">Repeat</keyword>
<keyword id="KW-0808">Transferase</keyword>
<keyword id="KW-0833">Ubl conjugation pathway</keyword>
<keyword id="KW-0862">Zinc</keyword>
<keyword id="KW-0863">Zinc-finger</keyword>
<reference key="1">
    <citation type="submission" date="2005-11" db="EMBL/GenBank/DDBJ databases">
        <authorList>
            <consortium name="NIH - Xenopus Gene Collection (XGC) project"/>
        </authorList>
    </citation>
    <scope>NUCLEOTIDE SEQUENCE [LARGE SCALE MRNA]</scope>
    <source>
        <tissue>Testis</tissue>
    </source>
</reference>
<accession>Q32NS4</accession>
<comment type="function">
    <text evidence="1">E3 ubiquitin-protein ligase, which catalyzes ubiquitination of target proteins together with ubiquitin-conjugating enzyme E2 ube2l3. Acts as an atypical E3 ubiquitin-protein ligase by working together with cullin-RING ubiquitin ligase (CRL) complexes and initiating ubiquitination of CRL substrates: associates with CRL complexes and specifically mediates addition of the first ubiquitin on CRLs targets. The initial ubiquitin is then elongated. E3 ubiquitin-protein ligase activity is activated upon binding to neddylated cullin-RING ubiquitin ligase complexes.</text>
</comment>
<comment type="catalytic activity">
    <reaction evidence="1">
        <text>[E2 ubiquitin-conjugating enzyme]-S-ubiquitinyl-L-cysteine + [acceptor protein]-L-lysine = [E2 ubiquitin-conjugating enzyme]-L-cysteine + [acceptor protein]-N(6)-ubiquitinyl-L-lysine.</text>
        <dbReference type="EC" id="2.3.2.31"/>
    </reaction>
</comment>
<comment type="activity regulation">
    <text evidence="1">Autoinhibited by the ariadne domain, which masks the second RING-type zinc finger that contains the active site and inhibits the E3 activity. Inhibition is relieved upon binding to neddylated cullin-RING ubiquitin ligase complexes, which activate the E3 ligase activity of ARIH1.</text>
</comment>
<comment type="pathway">
    <text>Protein modification; protein ubiquitination.</text>
</comment>
<comment type="subunit">
    <text evidence="1">Interacts (via the first RING-type zinc finger) with ube2l3. Associates with cullin-RING ubiquitin ligase (CRL) complexes containing neddylated cullin.</text>
</comment>
<comment type="subcellular location">
    <subcellularLocation>
        <location evidence="1">Cytoplasm</location>
    </subcellularLocation>
    <subcellularLocation>
        <location evidence="1">Nucleus</location>
    </subcellularLocation>
</comment>
<comment type="domain">
    <text evidence="1">Members of the RBR family are atypical E3 ligases. They interact with the E2 conjugating enzyme UBE2L3 and function like HECT-type E3 enzymes: they bind E2s via the first RING-type zinc finger, but require an obligate trans-thiolation step during the ubiquitin transfer, requiring a conserved active site Cys residue in the second RING-type zinc finger. The active site probably forms a thioester intermediate with ubiquitin taken from the active-site cysteine of the E2 before ultimately transferring it to a Lys residue on the substrate.</text>
</comment>
<comment type="domain">
    <text evidence="1">The Ariadne domain inhibits activity by masking the second RING-type zinc finger that contains the active site.</text>
</comment>
<comment type="similarity">
    <text evidence="4">Belongs to the RBR family. Ariadne subfamily.</text>
</comment>